<protein>
    <recommendedName>
        <fullName>Protein RepS</fullName>
    </recommendedName>
</protein>
<sequence>MNIPFVVETVLHDGLLKYKFKNSKIRSITTKPGKSKGAIFAYRSKKSMIGGRGVVLTSEEAIHENQDTFTHWTPNVYRYGTYADENRSYTKGHSENNLRQINTFFIDFDIHTEKETISASDILTTAIDLGFMPTLIIKSDKGYQAYFVLETPVYVTSKSEFKSVKAAKIISQNIREYFGKSLPVDLTCNHFGIARIPRTDNVEFFDPNYRYSFKEWQDWSFKQTDNKGFTRSSLMVLSGTEGKKQVDEPWFNLLLHETKFSGEKGLVGRNSVMFTLSLAYFSSGYSIETCEYNMFEFNNRLDQPLEEKEVIKLVRSAYSENYQGANREYITILCKAWVSSDLTSKDLFVRQGWFKFKKKRSERQRVHLSEWKEDLMAYISEKSDVYKPYLVTTKKEIREALGIPERTLDKLLKVLKANQEIFFKIKSGRNGGIQLASGKSLLLSIIKVKKEEKESYIKALTNSFDLEHTFIQETLNKLAERPKTDTQLDLFSYDTG</sequence>
<evidence type="ECO:0000255" key="1"/>
<evidence type="ECO:0000305" key="2"/>
<proteinExistence type="predicted"/>
<accession>P14752</accession>
<accession>Q54852</accession>
<feature type="chain" id="PRO_0000068336" description="Protein RepS">
    <location>
        <begin position="1"/>
        <end position="496"/>
    </location>
</feature>
<feature type="DNA-binding region" evidence="1">
    <location>
        <begin position="120"/>
        <end position="141"/>
    </location>
</feature>
<feature type="sequence conflict" description="In Ref. 5; CAA43478." evidence="2" ref="5">
    <original>G</original>
    <variation>V</variation>
    <location>
        <position position="438"/>
    </location>
</feature>
<organism>
    <name type="scientific">Streptococcus pyogenes</name>
    <dbReference type="NCBI Taxonomy" id="1314"/>
    <lineage>
        <taxon>Bacteria</taxon>
        <taxon>Bacillati</taxon>
        <taxon>Bacillota</taxon>
        <taxon>Bacilli</taxon>
        <taxon>Lactobacillales</taxon>
        <taxon>Streptococcaceae</taxon>
        <taxon>Streptococcus</taxon>
    </lineage>
</organism>
<name>REPS_STRPY</name>
<geneLocation type="plasmid">
    <name>pSM19035</name>
</geneLocation>
<geneLocation type="plasmid">
    <name>pMD101</name>
</geneLocation>
<geneLocation type="plasmid">
    <name>pBT233</name>
</geneLocation>
<reference key="1">
    <citation type="journal article" date="1989" name="Nucleic Acids Res.">
        <title>Revision of the nucleotide sequence of the Streptococcus pyogenes plasmid pSM19035 repS gene.</title>
        <authorList>
            <person name="Brantl S."/>
            <person name="Nowak A."/>
            <person name="Behnke D."/>
            <person name="Alonso J.C."/>
        </authorList>
    </citation>
    <scope>NUCLEOTIDE SEQUENCE [GENOMIC DNA]</scope>
    <source>
        <plasmid>pSM19035</plasmid>
    </source>
</reference>
<reference key="2">
    <citation type="book" date="1989" name="Genetic transformation and expression">
        <editorList>
            <person name="Butler L.O."/>
            <person name="Harwood C."/>
            <person name="Moseley B.E.B."/>
        </editorList>
        <authorList>
            <person name="Sorokin A.V."/>
            <person name="Khazak V.E."/>
        </authorList>
    </citation>
    <scope>NUCLEOTIDE SEQUENCE [GENOMIC DNA]</scope>
    <source>
        <plasmid>pSM19035</plasmid>
    </source>
</reference>
<reference key="3">
    <citation type="journal article" date="1993" name="Gene">
        <title>Analysis of the stabilization system of pSM19035-derived plasmid pBT233 in Bacillus subtilis.</title>
        <authorList>
            <person name="Ceglowski P."/>
            <person name="Boitsov A."/>
            <person name="Chai S."/>
            <person name="Alonso J.C."/>
        </authorList>
    </citation>
    <scope>NUCLEOTIDE SEQUENCE [GENOMIC DNA]</scope>
    <source>
        <plasmid>pBT233</plasmid>
    </source>
</reference>
<reference key="4">
    <citation type="journal article" date="1994" name="Gene">
        <title>Gene organization of the Streptococcus pyogenes plasmid pDB101: sequence analysis of the orf eta-copS region.</title>
        <authorList>
            <person name="Ceglowski P."/>
            <person name="Alonso J.C."/>
        </authorList>
    </citation>
    <scope>NUCLEOTIDE SEQUENCE [GENOMIC DNA]</scope>
    <source>
        <plasmid>pMD101</plasmid>
    </source>
</reference>
<reference key="5">
    <citation type="journal article" date="1990" name="Mol. Biol. (Mosk.)">
        <title>Expression unit in the region of replication initiation in the streptococcal plasmid pSM19035.</title>
        <authorList>
            <person name="Sorokin A.V."/>
            <person name="Khazak V.E."/>
        </authorList>
    </citation>
    <scope>NUCLEOTIDE SEQUENCE [GENOMIC DNA] OF 436-496</scope>
    <source>
        <plasmid>pSM19035</plasmid>
    </source>
</reference>
<keyword id="KW-0235">DNA replication</keyword>
<keyword id="KW-0238">DNA-binding</keyword>
<keyword id="KW-0614">Plasmid</keyword>
<dbReference type="EMBL" id="X16803">
    <property type="protein sequence ID" value="CAA34721.1"/>
    <property type="molecule type" value="Genomic_DNA"/>
</dbReference>
<dbReference type="EMBL" id="X64695">
    <property type="protein sequence ID" value="CAA45928.1"/>
    <property type="molecule type" value="Genomic_DNA"/>
</dbReference>
<dbReference type="EMBL" id="X66468">
    <property type="protein sequence ID" value="CAA47078.1"/>
    <property type="molecule type" value="Genomic_DNA"/>
</dbReference>
<dbReference type="EMBL" id="X61167">
    <property type="protein sequence ID" value="CAA43478.1"/>
    <property type="molecule type" value="Genomic_DNA"/>
</dbReference>
<dbReference type="PIR" id="S06925">
    <property type="entry name" value="S06925"/>
</dbReference>
<dbReference type="RefSeq" id="WP_011266101.1">
    <property type="nucleotide sequence ID" value="NC_006978.1"/>
</dbReference>
<dbReference type="RefSeq" id="YP_232731.1">
    <property type="nucleotide sequence ID" value="NC_006978.1"/>
</dbReference>
<dbReference type="RefSeq" id="YP_232752.1">
    <property type="nucleotide sequence ID" value="NC_006979.1"/>
</dbReference>
<dbReference type="RefSeq" id="YP_232769.1">
    <property type="nucleotide sequence ID" value="NC_006979.1"/>
</dbReference>
<dbReference type="GO" id="GO:0003677">
    <property type="term" value="F:DNA binding"/>
    <property type="evidence" value="ECO:0007669"/>
    <property type="project" value="UniProtKB-KW"/>
</dbReference>
<dbReference type="GO" id="GO:0006260">
    <property type="term" value="P:DNA replication"/>
    <property type="evidence" value="ECO:0007669"/>
    <property type="project" value="UniProtKB-KW"/>
</dbReference>
<dbReference type="InterPro" id="IPR014820">
    <property type="entry name" value="PriCT_1"/>
</dbReference>
<dbReference type="Pfam" id="PF08708">
    <property type="entry name" value="PriCT_1"/>
    <property type="match status" value="1"/>
</dbReference>
<comment type="function">
    <text>Essential for replication.</text>
</comment>
<comment type="caution">
    <text evidence="2">PubMed:2690001 sequence revises that published in Ref.2.</text>
</comment>
<gene>
    <name type="primary">repS</name>
</gene>